<protein>
    <recommendedName>
        <fullName evidence="1">Small ribosomal subunit protein uS19</fullName>
    </recommendedName>
    <alternativeName>
        <fullName evidence="2">30S ribosomal protein S19</fullName>
    </alternativeName>
</protein>
<name>RS19_PSECP</name>
<proteinExistence type="inferred from homology"/>
<sequence length="93" mass="10729">MPRSLKKGPFVDQHLFVKVARENEKGTKNVIKTWSRRSMIIPDMLGHTIAVHDGRKHIPVFVTESMVGHKLGEFAPTRTFRGHVKDDRKGKRR</sequence>
<feature type="chain" id="PRO_1000146363" description="Small ribosomal subunit protein uS19">
    <location>
        <begin position="1"/>
        <end position="93"/>
    </location>
</feature>
<accession>B8HD02</accession>
<keyword id="KW-0687">Ribonucleoprotein</keyword>
<keyword id="KW-0689">Ribosomal protein</keyword>
<keyword id="KW-0694">RNA-binding</keyword>
<keyword id="KW-0699">rRNA-binding</keyword>
<gene>
    <name evidence="1" type="primary">rpsS</name>
    <name type="ordered locus">Achl_2683</name>
</gene>
<reference key="1">
    <citation type="submission" date="2009-01" db="EMBL/GenBank/DDBJ databases">
        <title>Complete sequence of chromosome of Arthrobacter chlorophenolicus A6.</title>
        <authorList>
            <consortium name="US DOE Joint Genome Institute"/>
            <person name="Lucas S."/>
            <person name="Copeland A."/>
            <person name="Lapidus A."/>
            <person name="Glavina del Rio T."/>
            <person name="Tice H."/>
            <person name="Bruce D."/>
            <person name="Goodwin L."/>
            <person name="Pitluck S."/>
            <person name="Goltsman E."/>
            <person name="Clum A."/>
            <person name="Larimer F."/>
            <person name="Land M."/>
            <person name="Hauser L."/>
            <person name="Kyrpides N."/>
            <person name="Mikhailova N."/>
            <person name="Jansson J."/>
            <person name="Richardson P."/>
        </authorList>
    </citation>
    <scope>NUCLEOTIDE SEQUENCE [LARGE SCALE GENOMIC DNA]</scope>
    <source>
        <strain>ATCC 700700 / DSM 12829 / CIP 107037 / JCM 12360 / KCTC 9906 / NCIMB 13794 / A6</strain>
    </source>
</reference>
<dbReference type="EMBL" id="CP001341">
    <property type="protein sequence ID" value="ACL40648.1"/>
    <property type="molecule type" value="Genomic_DNA"/>
</dbReference>
<dbReference type="RefSeq" id="WP_003803803.1">
    <property type="nucleotide sequence ID" value="NC_011886.1"/>
</dbReference>
<dbReference type="SMR" id="B8HD02"/>
<dbReference type="STRING" id="452863.Achl_2683"/>
<dbReference type="GeneID" id="97421008"/>
<dbReference type="KEGG" id="ach:Achl_2683"/>
<dbReference type="eggNOG" id="COG0185">
    <property type="taxonomic scope" value="Bacteria"/>
</dbReference>
<dbReference type="HOGENOM" id="CLU_144911_0_1_11"/>
<dbReference type="OrthoDB" id="9797833at2"/>
<dbReference type="Proteomes" id="UP000002505">
    <property type="component" value="Chromosome"/>
</dbReference>
<dbReference type="GO" id="GO:0005737">
    <property type="term" value="C:cytoplasm"/>
    <property type="evidence" value="ECO:0007669"/>
    <property type="project" value="UniProtKB-ARBA"/>
</dbReference>
<dbReference type="GO" id="GO:0015935">
    <property type="term" value="C:small ribosomal subunit"/>
    <property type="evidence" value="ECO:0007669"/>
    <property type="project" value="InterPro"/>
</dbReference>
<dbReference type="GO" id="GO:0019843">
    <property type="term" value="F:rRNA binding"/>
    <property type="evidence" value="ECO:0007669"/>
    <property type="project" value="UniProtKB-UniRule"/>
</dbReference>
<dbReference type="GO" id="GO:0003735">
    <property type="term" value="F:structural constituent of ribosome"/>
    <property type="evidence" value="ECO:0007669"/>
    <property type="project" value="InterPro"/>
</dbReference>
<dbReference type="GO" id="GO:0000028">
    <property type="term" value="P:ribosomal small subunit assembly"/>
    <property type="evidence" value="ECO:0007669"/>
    <property type="project" value="TreeGrafter"/>
</dbReference>
<dbReference type="GO" id="GO:0006412">
    <property type="term" value="P:translation"/>
    <property type="evidence" value="ECO:0007669"/>
    <property type="project" value="UniProtKB-UniRule"/>
</dbReference>
<dbReference type="FunFam" id="3.30.860.10:FF:000001">
    <property type="entry name" value="30S ribosomal protein S19"/>
    <property type="match status" value="1"/>
</dbReference>
<dbReference type="Gene3D" id="3.30.860.10">
    <property type="entry name" value="30s Ribosomal Protein S19, Chain A"/>
    <property type="match status" value="1"/>
</dbReference>
<dbReference type="HAMAP" id="MF_00531">
    <property type="entry name" value="Ribosomal_uS19"/>
    <property type="match status" value="1"/>
</dbReference>
<dbReference type="InterPro" id="IPR002222">
    <property type="entry name" value="Ribosomal_uS19"/>
</dbReference>
<dbReference type="InterPro" id="IPR005732">
    <property type="entry name" value="Ribosomal_uS19_bac-type"/>
</dbReference>
<dbReference type="InterPro" id="IPR020934">
    <property type="entry name" value="Ribosomal_uS19_CS"/>
</dbReference>
<dbReference type="InterPro" id="IPR023575">
    <property type="entry name" value="Ribosomal_uS19_SF"/>
</dbReference>
<dbReference type="NCBIfam" id="TIGR01050">
    <property type="entry name" value="rpsS_bact"/>
    <property type="match status" value="1"/>
</dbReference>
<dbReference type="PANTHER" id="PTHR11880">
    <property type="entry name" value="RIBOSOMAL PROTEIN S19P FAMILY MEMBER"/>
    <property type="match status" value="1"/>
</dbReference>
<dbReference type="PANTHER" id="PTHR11880:SF8">
    <property type="entry name" value="SMALL RIBOSOMAL SUBUNIT PROTEIN US19M"/>
    <property type="match status" value="1"/>
</dbReference>
<dbReference type="Pfam" id="PF00203">
    <property type="entry name" value="Ribosomal_S19"/>
    <property type="match status" value="1"/>
</dbReference>
<dbReference type="PIRSF" id="PIRSF002144">
    <property type="entry name" value="Ribosomal_S19"/>
    <property type="match status" value="1"/>
</dbReference>
<dbReference type="PRINTS" id="PR00975">
    <property type="entry name" value="RIBOSOMALS19"/>
</dbReference>
<dbReference type="SUPFAM" id="SSF54570">
    <property type="entry name" value="Ribosomal protein S19"/>
    <property type="match status" value="1"/>
</dbReference>
<dbReference type="PROSITE" id="PS00323">
    <property type="entry name" value="RIBOSOMAL_S19"/>
    <property type="match status" value="1"/>
</dbReference>
<organism>
    <name type="scientific">Pseudarthrobacter chlorophenolicus (strain ATCC 700700 / DSM 12829 / CIP 107037 / JCM 12360 / KCTC 9906 / NCIMB 13794 / A6)</name>
    <name type="common">Arthrobacter chlorophenolicus</name>
    <dbReference type="NCBI Taxonomy" id="452863"/>
    <lineage>
        <taxon>Bacteria</taxon>
        <taxon>Bacillati</taxon>
        <taxon>Actinomycetota</taxon>
        <taxon>Actinomycetes</taxon>
        <taxon>Micrococcales</taxon>
        <taxon>Micrococcaceae</taxon>
        <taxon>Pseudarthrobacter</taxon>
    </lineage>
</organism>
<comment type="function">
    <text evidence="1">Protein S19 forms a complex with S13 that binds strongly to the 16S ribosomal RNA.</text>
</comment>
<comment type="similarity">
    <text evidence="1">Belongs to the universal ribosomal protein uS19 family.</text>
</comment>
<evidence type="ECO:0000255" key="1">
    <source>
        <dbReference type="HAMAP-Rule" id="MF_00531"/>
    </source>
</evidence>
<evidence type="ECO:0000305" key="2"/>